<sequence>MASRENEIIRPKANFHPSVWGDQFLVYEEPEDQVEVEKMVEGLKEEVRKEIVVALDNPSKHTDLLVLINEVQRLGIAYYFEEEIERALKHIYDTYGDHWKGGSAPLWFRLLRKQGYYVSCDIFNQYKDNTGSFKESLTNDVHGMLELYEAAYMRVHDEVILDDAPVFTKTHLAKMLKDSLGYNPTLSKYIQDSLERPIRKRLPRVDALHYIPFYEQQVSHNKSLLKLSKLGFNLLQSMHKKELSELFKWWKHFDVEKNIPYMRNRFVENYFWALGAYFEPQYSRARIFLTKVFAFATMLDDTYDAYGVYKELEIFTQAVERWSLTCLDALPEYMKLIYKELLDLYEEMDDTMAKEGAPYHVKYAKEAMKEFIGSYMTEARWKHEGYVPTTEEHKAVAFISSGYKMLTIASFVGMGDIASEDSFKWALSNPPLIKASCSICRMMDDVVGHKEEKERVGGHVASSVDSYMKQHNVTEDHVYDLFNTLVEDAWKDLNRESLICKEIPMVLKMRLINLTCFIDTLYKYEDTFTNVGPELIDCIKSHLVHAMSV</sequence>
<dbReference type="EC" id="4.2.3.75"/>
<dbReference type="EMBL" id="JQ837261">
    <property type="protein sequence ID" value="AFM43738.1"/>
    <property type="molecule type" value="mRNA"/>
</dbReference>
<dbReference type="SMR" id="I6QPS5"/>
<dbReference type="UniPathway" id="UPA00213"/>
<dbReference type="GO" id="GO:0052577">
    <property type="term" value="F:germacrene-D synthase activity"/>
    <property type="evidence" value="ECO:0007669"/>
    <property type="project" value="UniProtKB-EC"/>
</dbReference>
<dbReference type="GO" id="GO:0000287">
    <property type="term" value="F:magnesium ion binding"/>
    <property type="evidence" value="ECO:0007669"/>
    <property type="project" value="InterPro"/>
</dbReference>
<dbReference type="GO" id="GO:0016102">
    <property type="term" value="P:diterpenoid biosynthetic process"/>
    <property type="evidence" value="ECO:0007669"/>
    <property type="project" value="InterPro"/>
</dbReference>
<dbReference type="CDD" id="cd00684">
    <property type="entry name" value="Terpene_cyclase_plant_C1"/>
    <property type="match status" value="1"/>
</dbReference>
<dbReference type="FunFam" id="1.10.600.10:FF:000007">
    <property type="entry name" value="Isoprene synthase, chloroplastic"/>
    <property type="match status" value="1"/>
</dbReference>
<dbReference type="FunFam" id="1.50.10.130:FF:000001">
    <property type="entry name" value="Isoprene synthase, chloroplastic"/>
    <property type="match status" value="1"/>
</dbReference>
<dbReference type="Gene3D" id="1.10.600.10">
    <property type="entry name" value="Farnesyl Diphosphate Synthase"/>
    <property type="match status" value="1"/>
</dbReference>
<dbReference type="Gene3D" id="1.50.10.130">
    <property type="entry name" value="Terpene synthase, N-terminal domain"/>
    <property type="match status" value="1"/>
</dbReference>
<dbReference type="InterPro" id="IPR008949">
    <property type="entry name" value="Isoprenoid_synthase_dom_sf"/>
</dbReference>
<dbReference type="InterPro" id="IPR034741">
    <property type="entry name" value="Terpene_cyclase-like_1_C"/>
</dbReference>
<dbReference type="InterPro" id="IPR044814">
    <property type="entry name" value="Terpene_cyclase_plant_C1"/>
</dbReference>
<dbReference type="InterPro" id="IPR001906">
    <property type="entry name" value="Terpene_synth_N"/>
</dbReference>
<dbReference type="InterPro" id="IPR036965">
    <property type="entry name" value="Terpene_synth_N_sf"/>
</dbReference>
<dbReference type="InterPro" id="IPR050148">
    <property type="entry name" value="Terpene_synthase-like"/>
</dbReference>
<dbReference type="InterPro" id="IPR005630">
    <property type="entry name" value="Terpene_synthase_metal-bd"/>
</dbReference>
<dbReference type="InterPro" id="IPR008930">
    <property type="entry name" value="Terpenoid_cyclase/PrenylTrfase"/>
</dbReference>
<dbReference type="PANTHER" id="PTHR31225">
    <property type="entry name" value="OS04G0344100 PROTEIN-RELATED"/>
    <property type="match status" value="1"/>
</dbReference>
<dbReference type="PANTHER" id="PTHR31225:SF196">
    <property type="entry name" value="TERPENOID CYCLASES_PROTEIN PRENYLTRANSFERASE ALPHA-ALPHA TOROID-RELATED"/>
    <property type="match status" value="1"/>
</dbReference>
<dbReference type="Pfam" id="PF01397">
    <property type="entry name" value="Terpene_synth"/>
    <property type="match status" value="1"/>
</dbReference>
<dbReference type="Pfam" id="PF03936">
    <property type="entry name" value="Terpene_synth_C"/>
    <property type="match status" value="1"/>
</dbReference>
<dbReference type="SFLD" id="SFLDS00005">
    <property type="entry name" value="Isoprenoid_Synthase_Type_I"/>
    <property type="match status" value="1"/>
</dbReference>
<dbReference type="SFLD" id="SFLDG01019">
    <property type="entry name" value="Terpene_Cyclase_Like_1_C_Termi"/>
    <property type="match status" value="1"/>
</dbReference>
<dbReference type="SUPFAM" id="SSF48239">
    <property type="entry name" value="Terpenoid cyclases/Protein prenyltransferases"/>
    <property type="match status" value="1"/>
</dbReference>
<dbReference type="SUPFAM" id="SSF48576">
    <property type="entry name" value="Terpenoid synthases"/>
    <property type="match status" value="1"/>
</dbReference>
<organism>
    <name type="scientific">Matricaria chamomilla var. recutita</name>
    <name type="common">German chamomile</name>
    <name type="synonym">Chamomilla recutita</name>
    <dbReference type="NCBI Taxonomy" id="127986"/>
    <lineage>
        <taxon>Eukaryota</taxon>
        <taxon>Viridiplantae</taxon>
        <taxon>Streptophyta</taxon>
        <taxon>Embryophyta</taxon>
        <taxon>Tracheophyta</taxon>
        <taxon>Spermatophyta</taxon>
        <taxon>Magnoliopsida</taxon>
        <taxon>eudicotyledons</taxon>
        <taxon>Gunneridae</taxon>
        <taxon>Pentapetalae</taxon>
        <taxon>asterids</taxon>
        <taxon>campanulids</taxon>
        <taxon>Asterales</taxon>
        <taxon>Asteraceae</taxon>
        <taxon>Asteroideae</taxon>
        <taxon>Anthemideae</taxon>
        <taxon>Matricariinae</taxon>
        <taxon>Matricaria</taxon>
    </lineage>
</organism>
<evidence type="ECO:0000250" key="1"/>
<evidence type="ECO:0000269" key="2">
    <source>
    </source>
</evidence>
<evidence type="ECO:0000305" key="3"/>
<accession>I6QPS5</accession>
<reference key="1">
    <citation type="journal article" date="2012" name="BMC Plant Biol.">
        <title>The organ-specific expression of terpene synthase genes contributes to the terpene hydrocarbon composition of chamomile essential oils.</title>
        <authorList>
            <person name="Irmisch S."/>
            <person name="Krause S.T."/>
            <person name="Kunert G."/>
            <person name="Gershenzon J."/>
            <person name="Degenhardt J."/>
            <person name="Koellner T.G."/>
        </authorList>
    </citation>
    <scope>NUCLEOTIDE SEQUENCE [MRNA]</scope>
    <scope>FUNCTION</scope>
    <scope>CATALYTIC ACTIVITY</scope>
    <scope>TISSUE SPECIFICITY</scope>
    <source>
        <strain>cv. Bodegold</strain>
    </source>
</reference>
<protein>
    <recommendedName>
        <fullName>(-)-germacrene D synthase</fullName>
        <ecNumber>4.2.3.75</ecNumber>
    </recommendedName>
    <alternativeName>
        <fullName>Terpene synthase 5</fullName>
    </alternativeName>
</protein>
<comment type="function">
    <text evidence="2">Sesquiterpene synthase involved mainly in the biosynthesis of germacrene D. Produces exclusively the (-)-enantiomer.</text>
</comment>
<comment type="catalytic activity">
    <reaction evidence="2">
        <text>(2E,6E)-farnesyl diphosphate = (-)-germacrene D + diphosphate</text>
        <dbReference type="Rhea" id="RHEA:12016"/>
        <dbReference type="ChEBI" id="CHEBI:33019"/>
        <dbReference type="ChEBI" id="CHEBI:49044"/>
        <dbReference type="ChEBI" id="CHEBI:175763"/>
        <dbReference type="EC" id="4.2.3.75"/>
    </reaction>
</comment>
<comment type="cofactor">
    <cofactor evidence="1">
        <name>Mg(2+)</name>
        <dbReference type="ChEBI" id="CHEBI:18420"/>
    </cofactor>
    <cofactor evidence="1">
        <name>Mn(2+)</name>
        <dbReference type="ChEBI" id="CHEBI:29035"/>
    </cofactor>
    <text evidence="1">Binds 3 Mg(2+) or Mn(2+) ions per subunit.</text>
</comment>
<comment type="pathway">
    <text>Secondary metabolite biosynthesis; terpenoid biosynthesis.</text>
</comment>
<comment type="tissue specificity">
    <text evidence="2">Highly expressed in leaves, stems and disk florets. Detected in roots.</text>
</comment>
<comment type="domain">
    <text evidence="1">The Asp-Asp-Xaa-Xaa-Asp/Glu (DDXXD/E) motif is important for the catalytic activity, presumably through binding to Mg(2+).</text>
</comment>
<comment type="similarity">
    <text evidence="3">Belongs to the terpene synthase family. Tpsa subfamily.</text>
</comment>
<proteinExistence type="evidence at protein level"/>
<keyword id="KW-0456">Lyase</keyword>
<keyword id="KW-0460">Magnesium</keyword>
<keyword id="KW-0464">Manganese</keyword>
<keyword id="KW-0479">Metal-binding</keyword>
<feature type="chain" id="PRO_0000421929" description="(-)-germacrene D synthase">
    <location>
        <begin position="1"/>
        <end position="549"/>
    </location>
</feature>
<feature type="short sequence motif" description="DDXXD motif">
    <location>
        <begin position="300"/>
        <end position="304"/>
    </location>
</feature>
<feature type="binding site" evidence="1">
    <location>
        <position position="300"/>
    </location>
    <ligand>
        <name>Mg(2+)</name>
        <dbReference type="ChEBI" id="CHEBI:18420"/>
        <label>1</label>
    </ligand>
</feature>
<feature type="binding site" evidence="1">
    <location>
        <position position="300"/>
    </location>
    <ligand>
        <name>Mg(2+)</name>
        <dbReference type="ChEBI" id="CHEBI:18420"/>
        <label>2</label>
    </ligand>
</feature>
<feature type="binding site" evidence="1">
    <location>
        <position position="304"/>
    </location>
    <ligand>
        <name>Mg(2+)</name>
        <dbReference type="ChEBI" id="CHEBI:18420"/>
        <label>1</label>
    </ligand>
</feature>
<feature type="binding site" evidence="1">
    <location>
        <position position="304"/>
    </location>
    <ligand>
        <name>Mg(2+)</name>
        <dbReference type="ChEBI" id="CHEBI:18420"/>
        <label>2</label>
    </ligand>
</feature>
<feature type="binding site" evidence="1">
    <location>
        <position position="444"/>
    </location>
    <ligand>
        <name>Mg(2+)</name>
        <dbReference type="ChEBI" id="CHEBI:18420"/>
        <label>3</label>
    </ligand>
</feature>
<feature type="binding site" evidence="1">
    <location>
        <position position="452"/>
    </location>
    <ligand>
        <name>Mg(2+)</name>
        <dbReference type="ChEBI" id="CHEBI:18420"/>
        <label>3</label>
    </ligand>
</feature>
<name>TPS5_MATCR</name>